<sequence>MRFNIVTLFPEYFDSPLACGLMGKARESGLVEVGFVNPRDHTTDRHRTVDDRPYGGGPGMVMMPGPLAAALRSIPRPGRILLMAPKGRPFTQELARELATGDNLTIICGRYEGIDARLESVFPIEPVSMGDFVLNGGETAAMAVMEATGRLVPGYMGHEESGEEESFSSGLLEYPHYTRPEIFEGHEVPEILRSGDHGRIAAWRREQALKTTLLNRPEILRDAQIDYNDLKILRKTDRERPGRNLYCALVHYPVVNKENKSVAVSLTNLDIHDIGRCSCTFGLGGYYITTPIEDQRRLLDGLLRHWTDGPGVSANPDRGTALRLVRGVSTVEEAIGDIEQRTGQRPTVIATSARGAGDTGFESVRRMLREKPVLLLFGTAHGLAPDVLERCDGILRPIRSLDGYNHLSVRTAAAIIVDRVLGDAL</sequence>
<proteinExistence type="inferred from homology"/>
<evidence type="ECO:0000250" key="1"/>
<evidence type="ECO:0000305" key="2"/>
<protein>
    <recommendedName>
        <fullName>tRNA (guanine-N(1)-)-methyltransferase</fullName>
        <ecNumber>2.1.1.228</ecNumber>
    </recommendedName>
    <alternativeName>
        <fullName>M1G-methyltransferase</fullName>
    </alternativeName>
    <alternativeName>
        <fullName>tRNA [GM37] methyltransferase</fullName>
    </alternativeName>
</protein>
<comment type="function">
    <text evidence="1">Specifically methylates guanosine-37 in various tRNAs.</text>
</comment>
<comment type="catalytic activity">
    <reaction>
        <text>guanosine(37) in tRNA + S-adenosyl-L-methionine = N(1)-methylguanosine(37) in tRNA + S-adenosyl-L-homocysteine + H(+)</text>
        <dbReference type="Rhea" id="RHEA:36899"/>
        <dbReference type="Rhea" id="RHEA-COMP:10145"/>
        <dbReference type="Rhea" id="RHEA-COMP:10147"/>
        <dbReference type="ChEBI" id="CHEBI:15378"/>
        <dbReference type="ChEBI" id="CHEBI:57856"/>
        <dbReference type="ChEBI" id="CHEBI:59789"/>
        <dbReference type="ChEBI" id="CHEBI:73542"/>
        <dbReference type="ChEBI" id="CHEBI:74269"/>
        <dbReference type="EC" id="2.1.1.228"/>
    </reaction>
</comment>
<comment type="subunit">
    <text evidence="1">Homodimer.</text>
</comment>
<comment type="subcellular location">
    <subcellularLocation>
        <location evidence="2">Cytoplasm</location>
    </subcellularLocation>
</comment>
<comment type="similarity">
    <text evidence="2">Belongs to the RNA methyltransferase TrmD family.</text>
</comment>
<accession>Q313J9</accession>
<name>TRMD_OLEA2</name>
<reference key="1">
    <citation type="journal article" date="2011" name="J. Bacteriol.">
        <title>Complete genome sequence and updated annotation of Desulfovibrio alaskensis G20.</title>
        <authorList>
            <person name="Hauser L.J."/>
            <person name="Land M.L."/>
            <person name="Brown S.D."/>
            <person name="Larimer F."/>
            <person name="Keller K.L."/>
            <person name="Rapp-Giles B.J."/>
            <person name="Price M.N."/>
            <person name="Lin M."/>
            <person name="Bruce D.C."/>
            <person name="Detter J.C."/>
            <person name="Tapia R."/>
            <person name="Han C.S."/>
            <person name="Goodwin L.A."/>
            <person name="Cheng J.F."/>
            <person name="Pitluck S."/>
            <person name="Copeland A."/>
            <person name="Lucas S."/>
            <person name="Nolan M."/>
            <person name="Lapidus A.L."/>
            <person name="Palumbo A.V."/>
            <person name="Wall J.D."/>
        </authorList>
    </citation>
    <scope>NUCLEOTIDE SEQUENCE [LARGE SCALE GENOMIC DNA]</scope>
    <source>
        <strain>ATCC BAA-1058 / DSM 17464 / G20</strain>
    </source>
</reference>
<gene>
    <name type="primary">trmD</name>
    <name type="ordered locus">Dde_1096</name>
</gene>
<keyword id="KW-0963">Cytoplasm</keyword>
<keyword id="KW-0489">Methyltransferase</keyword>
<keyword id="KW-1185">Reference proteome</keyword>
<keyword id="KW-0949">S-adenosyl-L-methionine</keyword>
<keyword id="KW-0808">Transferase</keyword>
<keyword id="KW-0819">tRNA processing</keyword>
<feature type="chain" id="PRO_0000257415" description="tRNA (guanine-N(1)-)-methyltransferase">
    <location>
        <begin position="1"/>
        <end position="425"/>
    </location>
</feature>
<feature type="region of interest" description="tRNA (guanine-N(1)-)-methyltransferase">
    <location>
        <begin position="1"/>
        <end position="241"/>
    </location>
</feature>
<feature type="region of interest" description="Unknown">
    <location>
        <begin position="242"/>
        <end position="425"/>
    </location>
</feature>
<feature type="binding site" evidence="1">
    <location>
        <position position="109"/>
    </location>
    <ligand>
        <name>S-adenosyl-L-methionine</name>
        <dbReference type="ChEBI" id="CHEBI:59789"/>
    </ligand>
</feature>
<feature type="binding site" evidence="1">
    <location>
        <begin position="129"/>
        <end position="134"/>
    </location>
    <ligand>
        <name>S-adenosyl-L-methionine</name>
        <dbReference type="ChEBI" id="CHEBI:59789"/>
    </ligand>
</feature>
<dbReference type="EC" id="2.1.1.228"/>
<dbReference type="EMBL" id="CP000112">
    <property type="protein sequence ID" value="ABB37897.1"/>
    <property type="molecule type" value="Genomic_DNA"/>
</dbReference>
<dbReference type="RefSeq" id="WP_011367127.1">
    <property type="nucleotide sequence ID" value="NC_007519.1"/>
</dbReference>
<dbReference type="SMR" id="Q313J9"/>
<dbReference type="STRING" id="207559.Dde_1096"/>
<dbReference type="KEGG" id="dde:Dde_1096"/>
<dbReference type="eggNOG" id="COG0336">
    <property type="taxonomic scope" value="Bacteria"/>
</dbReference>
<dbReference type="eggNOG" id="COG4752">
    <property type="taxonomic scope" value="Bacteria"/>
</dbReference>
<dbReference type="HOGENOM" id="CLU_047363_2_1_7"/>
<dbReference type="Proteomes" id="UP000002710">
    <property type="component" value="Chromosome"/>
</dbReference>
<dbReference type="GO" id="GO:0005829">
    <property type="term" value="C:cytosol"/>
    <property type="evidence" value="ECO:0007669"/>
    <property type="project" value="TreeGrafter"/>
</dbReference>
<dbReference type="GO" id="GO:0052906">
    <property type="term" value="F:tRNA (guanine(37)-N1)-methyltransferase activity"/>
    <property type="evidence" value="ECO:0007669"/>
    <property type="project" value="UniProtKB-UniRule"/>
</dbReference>
<dbReference type="GO" id="GO:0002939">
    <property type="term" value="P:tRNA N1-guanine methylation"/>
    <property type="evidence" value="ECO:0007669"/>
    <property type="project" value="TreeGrafter"/>
</dbReference>
<dbReference type="CDD" id="cd18085">
    <property type="entry name" value="TM1570-like"/>
    <property type="match status" value="1"/>
</dbReference>
<dbReference type="CDD" id="cd18080">
    <property type="entry name" value="TrmD-like"/>
    <property type="match status" value="1"/>
</dbReference>
<dbReference type="FunFam" id="1.10.1270.20:FF:000001">
    <property type="entry name" value="tRNA (guanine-N(1)-)-methyltransferase"/>
    <property type="match status" value="1"/>
</dbReference>
<dbReference type="FunFam" id="3.40.1280.10:FF:000001">
    <property type="entry name" value="tRNA (guanine-N(1)-)-methyltransferase"/>
    <property type="match status" value="1"/>
</dbReference>
<dbReference type="Gene3D" id="3.40.1280.10">
    <property type="match status" value="2"/>
</dbReference>
<dbReference type="Gene3D" id="1.10.1270.20">
    <property type="entry name" value="tRNA(m1g37)methyltransferase, domain 2"/>
    <property type="match status" value="1"/>
</dbReference>
<dbReference type="HAMAP" id="MF_00605">
    <property type="entry name" value="TrmD"/>
    <property type="match status" value="1"/>
</dbReference>
<dbReference type="InterPro" id="IPR029028">
    <property type="entry name" value="Alpha/beta_knot_MTases"/>
</dbReference>
<dbReference type="InterPro" id="IPR019230">
    <property type="entry name" value="RNA_MeTrfase_C_dom"/>
</dbReference>
<dbReference type="InterPro" id="IPR023148">
    <property type="entry name" value="tRNA_m1G_MeTrfase_C_sf"/>
</dbReference>
<dbReference type="InterPro" id="IPR002649">
    <property type="entry name" value="tRNA_m1G_MeTrfase_TrmD"/>
</dbReference>
<dbReference type="InterPro" id="IPR029026">
    <property type="entry name" value="tRNA_m1G_MTases_N"/>
</dbReference>
<dbReference type="InterPro" id="IPR016009">
    <property type="entry name" value="tRNA_MeTrfase_TRMD/TRM10"/>
</dbReference>
<dbReference type="NCBIfam" id="NF000648">
    <property type="entry name" value="PRK00026.1"/>
    <property type="match status" value="1"/>
</dbReference>
<dbReference type="NCBIfam" id="TIGR00088">
    <property type="entry name" value="trmD"/>
    <property type="match status" value="1"/>
</dbReference>
<dbReference type="PANTHER" id="PTHR46417">
    <property type="entry name" value="TRNA (GUANINE-N(1)-)-METHYLTRANSFERASE"/>
    <property type="match status" value="1"/>
</dbReference>
<dbReference type="PANTHER" id="PTHR46417:SF1">
    <property type="entry name" value="TRNA (GUANINE-N(1)-)-METHYLTRANSFERASE"/>
    <property type="match status" value="1"/>
</dbReference>
<dbReference type="Pfam" id="PF09936">
    <property type="entry name" value="Methyltrn_RNA_4"/>
    <property type="match status" value="1"/>
</dbReference>
<dbReference type="Pfam" id="PF01746">
    <property type="entry name" value="tRNA_m1G_MT"/>
    <property type="match status" value="1"/>
</dbReference>
<dbReference type="SUPFAM" id="SSF75217">
    <property type="entry name" value="alpha/beta knot"/>
    <property type="match status" value="2"/>
</dbReference>
<organism>
    <name type="scientific">Oleidesulfovibrio alaskensis (strain ATCC BAA-1058 / DSM 17464 / G20)</name>
    <name type="common">Desulfovibrio alaskensis</name>
    <dbReference type="NCBI Taxonomy" id="207559"/>
    <lineage>
        <taxon>Bacteria</taxon>
        <taxon>Pseudomonadati</taxon>
        <taxon>Thermodesulfobacteriota</taxon>
        <taxon>Desulfovibrionia</taxon>
        <taxon>Desulfovibrionales</taxon>
        <taxon>Desulfovibrionaceae</taxon>
        <taxon>Oleidesulfovibrio</taxon>
    </lineage>
</organism>